<gene>
    <name evidence="1" type="primary">rpl34e</name>
    <name type="ordered locus">YG5714_1441</name>
</gene>
<organism>
    <name type="scientific">Saccharolobus islandicus (strain Y.G.57.14 / Yellowstone #1)</name>
    <name type="common">Sulfolobus islandicus</name>
    <dbReference type="NCBI Taxonomy" id="439386"/>
    <lineage>
        <taxon>Archaea</taxon>
        <taxon>Thermoproteota</taxon>
        <taxon>Thermoprotei</taxon>
        <taxon>Sulfolobales</taxon>
        <taxon>Sulfolobaceae</taxon>
        <taxon>Saccharolobus</taxon>
    </lineage>
</organism>
<comment type="similarity">
    <text evidence="1">Belongs to the eukaryotic ribosomal protein eL34 family.</text>
</comment>
<dbReference type="EMBL" id="CP001403">
    <property type="protein sequence ID" value="ACP45708.1"/>
    <property type="molecule type" value="Genomic_DNA"/>
</dbReference>
<dbReference type="RefSeq" id="WP_012713741.1">
    <property type="nucleotide sequence ID" value="NC_012622.1"/>
</dbReference>
<dbReference type="SMR" id="C3NEG9"/>
<dbReference type="KEGG" id="siy:YG5714_1441"/>
<dbReference type="HOGENOM" id="CLU_118652_2_0_2"/>
<dbReference type="Proteomes" id="UP000002308">
    <property type="component" value="Chromosome"/>
</dbReference>
<dbReference type="GO" id="GO:1990904">
    <property type="term" value="C:ribonucleoprotein complex"/>
    <property type="evidence" value="ECO:0007669"/>
    <property type="project" value="UniProtKB-KW"/>
</dbReference>
<dbReference type="GO" id="GO:0005840">
    <property type="term" value="C:ribosome"/>
    <property type="evidence" value="ECO:0007669"/>
    <property type="project" value="UniProtKB-KW"/>
</dbReference>
<dbReference type="GO" id="GO:0003735">
    <property type="term" value="F:structural constituent of ribosome"/>
    <property type="evidence" value="ECO:0007669"/>
    <property type="project" value="InterPro"/>
</dbReference>
<dbReference type="GO" id="GO:0006412">
    <property type="term" value="P:translation"/>
    <property type="evidence" value="ECO:0007669"/>
    <property type="project" value="UniProtKB-UniRule"/>
</dbReference>
<dbReference type="Gene3D" id="6.20.340.10">
    <property type="match status" value="1"/>
</dbReference>
<dbReference type="HAMAP" id="MF_00349">
    <property type="entry name" value="Ribosomal_eL34"/>
    <property type="match status" value="1"/>
</dbReference>
<dbReference type="InterPro" id="IPR008195">
    <property type="entry name" value="Ribosomal_eL34"/>
</dbReference>
<dbReference type="InterPro" id="IPR038562">
    <property type="entry name" value="Ribosomal_eL34_C_sf"/>
</dbReference>
<dbReference type="InterPro" id="IPR018065">
    <property type="entry name" value="Ribosomal_eL34_CS"/>
</dbReference>
<dbReference type="InterPro" id="IPR047868">
    <property type="entry name" value="Ribosomal_L34e_arc-type"/>
</dbReference>
<dbReference type="NCBIfam" id="NF003143">
    <property type="entry name" value="PRK04059.1"/>
    <property type="match status" value="1"/>
</dbReference>
<dbReference type="Pfam" id="PF01199">
    <property type="entry name" value="Ribosomal_L34e"/>
    <property type="match status" value="1"/>
</dbReference>
<dbReference type="PRINTS" id="PR01250">
    <property type="entry name" value="RIBOSOMALL34"/>
</dbReference>
<dbReference type="PROSITE" id="PS01145">
    <property type="entry name" value="RIBOSOMAL_L34E"/>
    <property type="match status" value="1"/>
</dbReference>
<feature type="chain" id="PRO_1000205336" description="Large ribosomal subunit protein eL34">
    <location>
        <begin position="1"/>
        <end position="85"/>
    </location>
</feature>
<sequence length="85" mass="9804">MPRPALRSRSLRRIYVKLPSGKTAIHYERKKNDISKCAMCKKPLHGVKTNFLHKYGKSEKRPERPFGGYLCSSCLAQLIKAMVRQ</sequence>
<accession>C3NEG9</accession>
<evidence type="ECO:0000255" key="1">
    <source>
        <dbReference type="HAMAP-Rule" id="MF_00349"/>
    </source>
</evidence>
<evidence type="ECO:0000305" key="2"/>
<proteinExistence type="inferred from homology"/>
<protein>
    <recommendedName>
        <fullName evidence="1">Large ribosomal subunit protein eL34</fullName>
    </recommendedName>
    <alternativeName>
        <fullName evidence="2">50S ribosomal protein L34e</fullName>
    </alternativeName>
</protein>
<keyword id="KW-0687">Ribonucleoprotein</keyword>
<keyword id="KW-0689">Ribosomal protein</keyword>
<reference key="1">
    <citation type="journal article" date="2009" name="Proc. Natl. Acad. Sci. U.S.A.">
        <title>Biogeography of the Sulfolobus islandicus pan-genome.</title>
        <authorList>
            <person name="Reno M.L."/>
            <person name="Held N.L."/>
            <person name="Fields C.J."/>
            <person name="Burke P.V."/>
            <person name="Whitaker R.J."/>
        </authorList>
    </citation>
    <scope>NUCLEOTIDE SEQUENCE [LARGE SCALE GENOMIC DNA]</scope>
    <source>
        <strain>Y.G.57.14 / Yellowstone #1</strain>
    </source>
</reference>
<name>RL34_SACI7</name>